<keyword id="KW-1185">Reference proteome</keyword>
<keyword id="KW-0687">Ribonucleoprotein</keyword>
<keyword id="KW-0689">Ribosomal protein</keyword>
<gene>
    <name evidence="1" type="primary">rpsU</name>
    <name evidence="1" type="synonym">rps21</name>
    <name type="ordered locus">SynRCC307_0352</name>
</gene>
<dbReference type="EMBL" id="CT978603">
    <property type="protein sequence ID" value="CAK27255.1"/>
    <property type="molecule type" value="Genomic_DNA"/>
</dbReference>
<dbReference type="SMR" id="A5GQU6"/>
<dbReference type="STRING" id="316278.SynRCC307_0352"/>
<dbReference type="KEGG" id="syr:SynRCC307_0352"/>
<dbReference type="eggNOG" id="COG0828">
    <property type="taxonomic scope" value="Bacteria"/>
</dbReference>
<dbReference type="HOGENOM" id="CLU_159258_3_1_3"/>
<dbReference type="OrthoDB" id="9799244at2"/>
<dbReference type="Proteomes" id="UP000001115">
    <property type="component" value="Chromosome"/>
</dbReference>
<dbReference type="GO" id="GO:1990904">
    <property type="term" value="C:ribonucleoprotein complex"/>
    <property type="evidence" value="ECO:0007669"/>
    <property type="project" value="UniProtKB-KW"/>
</dbReference>
<dbReference type="GO" id="GO:0005840">
    <property type="term" value="C:ribosome"/>
    <property type="evidence" value="ECO:0007669"/>
    <property type="project" value="UniProtKB-KW"/>
</dbReference>
<dbReference type="GO" id="GO:0003735">
    <property type="term" value="F:structural constituent of ribosome"/>
    <property type="evidence" value="ECO:0007669"/>
    <property type="project" value="InterPro"/>
</dbReference>
<dbReference type="GO" id="GO:0006412">
    <property type="term" value="P:translation"/>
    <property type="evidence" value="ECO:0007669"/>
    <property type="project" value="UniProtKB-UniRule"/>
</dbReference>
<dbReference type="Gene3D" id="1.20.5.1150">
    <property type="entry name" value="Ribosomal protein S8"/>
    <property type="match status" value="1"/>
</dbReference>
<dbReference type="HAMAP" id="MF_00358">
    <property type="entry name" value="Ribosomal_bS21"/>
    <property type="match status" value="1"/>
</dbReference>
<dbReference type="InterPro" id="IPR001911">
    <property type="entry name" value="Ribosomal_bS21"/>
</dbReference>
<dbReference type="InterPro" id="IPR018278">
    <property type="entry name" value="Ribosomal_bS21_CS"/>
</dbReference>
<dbReference type="InterPro" id="IPR038380">
    <property type="entry name" value="Ribosomal_bS21_sf"/>
</dbReference>
<dbReference type="NCBIfam" id="TIGR00030">
    <property type="entry name" value="S21p"/>
    <property type="match status" value="1"/>
</dbReference>
<dbReference type="PANTHER" id="PTHR21109">
    <property type="entry name" value="MITOCHONDRIAL 28S RIBOSOMAL PROTEIN S21"/>
    <property type="match status" value="1"/>
</dbReference>
<dbReference type="PANTHER" id="PTHR21109:SF0">
    <property type="entry name" value="SMALL RIBOSOMAL SUBUNIT PROTEIN BS21M"/>
    <property type="match status" value="1"/>
</dbReference>
<dbReference type="Pfam" id="PF01165">
    <property type="entry name" value="Ribosomal_S21"/>
    <property type="match status" value="1"/>
</dbReference>
<dbReference type="PRINTS" id="PR00976">
    <property type="entry name" value="RIBOSOMALS21"/>
</dbReference>
<dbReference type="PROSITE" id="PS01181">
    <property type="entry name" value="RIBOSOMAL_S21"/>
    <property type="match status" value="1"/>
</dbReference>
<protein>
    <recommendedName>
        <fullName evidence="1">Small ribosomal subunit protein bS21</fullName>
    </recommendedName>
    <alternativeName>
        <fullName evidence="2">30S ribosomal protein S21</fullName>
    </alternativeName>
</protein>
<organism>
    <name type="scientific">Synechococcus sp. (strain RCC307)</name>
    <dbReference type="NCBI Taxonomy" id="316278"/>
    <lineage>
        <taxon>Bacteria</taxon>
        <taxon>Bacillati</taxon>
        <taxon>Cyanobacteriota</taxon>
        <taxon>Cyanophyceae</taxon>
        <taxon>Synechococcales</taxon>
        <taxon>Synechococcaceae</taxon>
        <taxon>Synechococcus</taxon>
    </lineage>
</organism>
<accession>A5GQU6</accession>
<name>RS21_SYNR3</name>
<sequence length="56" mass="6790">MTQVTVGENEGIESALRRFKRQVSKAGIFADLKRLRHHETPVEKYKRKLQQRRRRR</sequence>
<reference key="1">
    <citation type="submission" date="2006-05" db="EMBL/GenBank/DDBJ databases">
        <authorList>
            <consortium name="Genoscope"/>
        </authorList>
    </citation>
    <scope>NUCLEOTIDE SEQUENCE [LARGE SCALE GENOMIC DNA]</scope>
    <source>
        <strain>RCC307</strain>
    </source>
</reference>
<feature type="chain" id="PRO_1000005183" description="Small ribosomal subunit protein bS21">
    <location>
        <begin position="1"/>
        <end position="56"/>
    </location>
</feature>
<evidence type="ECO:0000255" key="1">
    <source>
        <dbReference type="HAMAP-Rule" id="MF_00358"/>
    </source>
</evidence>
<evidence type="ECO:0000305" key="2"/>
<proteinExistence type="inferred from homology"/>
<comment type="similarity">
    <text evidence="1">Belongs to the bacterial ribosomal protein bS21 family.</text>
</comment>